<organism>
    <name type="scientific">Rattus norvegicus</name>
    <name type="common">Rat</name>
    <dbReference type="NCBI Taxonomy" id="10116"/>
    <lineage>
        <taxon>Eukaryota</taxon>
        <taxon>Metazoa</taxon>
        <taxon>Chordata</taxon>
        <taxon>Craniata</taxon>
        <taxon>Vertebrata</taxon>
        <taxon>Euteleostomi</taxon>
        <taxon>Mammalia</taxon>
        <taxon>Eutheria</taxon>
        <taxon>Euarchontoglires</taxon>
        <taxon>Glires</taxon>
        <taxon>Rodentia</taxon>
        <taxon>Myomorpha</taxon>
        <taxon>Muroidea</taxon>
        <taxon>Muridae</taxon>
        <taxon>Murinae</taxon>
        <taxon>Rattus</taxon>
    </lineage>
</organism>
<dbReference type="EC" id="3.4.19.12"/>
<dbReference type="EMBL" id="AB073880">
    <property type="protein sequence ID" value="BAD00009.1"/>
    <property type="molecule type" value="mRNA"/>
</dbReference>
<dbReference type="RefSeq" id="NP_942080.1">
    <property type="nucleotide sequence ID" value="NM_198785.1"/>
</dbReference>
<dbReference type="SMR" id="Q76LT8"/>
<dbReference type="BioGRID" id="263601">
    <property type="interactions" value="1"/>
</dbReference>
<dbReference type="FunCoup" id="Q76LT8">
    <property type="interactions" value="3656"/>
</dbReference>
<dbReference type="STRING" id="10116.ENSRNOP00000069188"/>
<dbReference type="MEROPS" id="C19.068"/>
<dbReference type="GlyGen" id="Q76LT8">
    <property type="glycosylation" value="1 site"/>
</dbReference>
<dbReference type="iPTMnet" id="Q76LT8"/>
<dbReference type="PhosphoSitePlus" id="Q76LT8"/>
<dbReference type="PaxDb" id="10116-ENSRNOP00000030008"/>
<dbReference type="GeneID" id="362636"/>
<dbReference type="KEGG" id="rno:362636"/>
<dbReference type="UCSC" id="RGD:735213">
    <property type="organism name" value="rat"/>
</dbReference>
<dbReference type="AGR" id="RGD:735213"/>
<dbReference type="CTD" id="84196"/>
<dbReference type="RGD" id="735213">
    <property type="gene designation" value="Usp48"/>
</dbReference>
<dbReference type="eggNOG" id="KOG1863">
    <property type="taxonomic scope" value="Eukaryota"/>
</dbReference>
<dbReference type="InParanoid" id="Q76LT8"/>
<dbReference type="OrthoDB" id="289038at2759"/>
<dbReference type="PhylomeDB" id="Q76LT8"/>
<dbReference type="Reactome" id="R-RNO-5689880">
    <property type="pathway name" value="Ub-specific processing proteases"/>
</dbReference>
<dbReference type="PRO" id="PR:Q76LT8"/>
<dbReference type="Proteomes" id="UP000002494">
    <property type="component" value="Unplaced"/>
</dbReference>
<dbReference type="GO" id="GO:0005929">
    <property type="term" value="C:cilium"/>
    <property type="evidence" value="ECO:0007669"/>
    <property type="project" value="UniProtKB-SubCell"/>
</dbReference>
<dbReference type="GO" id="GO:0005829">
    <property type="term" value="C:cytosol"/>
    <property type="evidence" value="ECO:0000318"/>
    <property type="project" value="GO_Central"/>
</dbReference>
<dbReference type="GO" id="GO:0005634">
    <property type="term" value="C:nucleus"/>
    <property type="evidence" value="ECO:0000318"/>
    <property type="project" value="GO_Central"/>
</dbReference>
<dbReference type="GO" id="GO:0045211">
    <property type="term" value="C:postsynaptic membrane"/>
    <property type="evidence" value="ECO:0000314"/>
    <property type="project" value="RGD"/>
</dbReference>
<dbReference type="GO" id="GO:0004843">
    <property type="term" value="F:cysteine-type deubiquitinase activity"/>
    <property type="evidence" value="ECO:0000318"/>
    <property type="project" value="GO_Central"/>
</dbReference>
<dbReference type="GO" id="GO:0004197">
    <property type="term" value="F:cysteine-type endopeptidase activity"/>
    <property type="evidence" value="ECO:0007669"/>
    <property type="project" value="InterPro"/>
</dbReference>
<dbReference type="GO" id="GO:0101005">
    <property type="term" value="F:deubiquitinase activity"/>
    <property type="evidence" value="ECO:0000266"/>
    <property type="project" value="RGD"/>
</dbReference>
<dbReference type="GO" id="GO:0016579">
    <property type="term" value="P:protein deubiquitination"/>
    <property type="evidence" value="ECO:0007669"/>
    <property type="project" value="InterPro"/>
</dbReference>
<dbReference type="GO" id="GO:0006508">
    <property type="term" value="P:proteolysis"/>
    <property type="evidence" value="ECO:0007669"/>
    <property type="project" value="UniProtKB-KW"/>
</dbReference>
<dbReference type="GO" id="GO:0031647">
    <property type="term" value="P:regulation of protein stability"/>
    <property type="evidence" value="ECO:0000318"/>
    <property type="project" value="GO_Central"/>
</dbReference>
<dbReference type="CDD" id="cd02668">
    <property type="entry name" value="Peptidase_C19L"/>
    <property type="match status" value="1"/>
</dbReference>
<dbReference type="CDD" id="cd01795">
    <property type="entry name" value="Ubl_USP48"/>
    <property type="match status" value="1"/>
</dbReference>
<dbReference type="FunFam" id="3.90.70.10:FF:000029">
    <property type="entry name" value="ubiquitin carboxyl-terminal hydrolase 48 isoform X1"/>
    <property type="match status" value="1"/>
</dbReference>
<dbReference type="Gene3D" id="3.90.70.10">
    <property type="entry name" value="Cysteine proteinases"/>
    <property type="match status" value="1"/>
</dbReference>
<dbReference type="Gene3D" id="3.10.20.90">
    <property type="entry name" value="Phosphatidylinositol 3-kinase Catalytic Subunit, Chain A, domain 1"/>
    <property type="match status" value="1"/>
</dbReference>
<dbReference type="InterPro" id="IPR035927">
    <property type="entry name" value="DUSP-like_sf"/>
</dbReference>
<dbReference type="InterPro" id="IPR038765">
    <property type="entry name" value="Papain-like_cys_pep_sf"/>
</dbReference>
<dbReference type="InterPro" id="IPR006615">
    <property type="entry name" value="Pept_C19_DUSP"/>
</dbReference>
<dbReference type="InterPro" id="IPR050164">
    <property type="entry name" value="Peptidase_C19"/>
</dbReference>
<dbReference type="InterPro" id="IPR001394">
    <property type="entry name" value="Peptidase_C19_UCH"/>
</dbReference>
<dbReference type="InterPro" id="IPR000626">
    <property type="entry name" value="Ubiquitin-like_dom"/>
</dbReference>
<dbReference type="InterPro" id="IPR029071">
    <property type="entry name" value="Ubiquitin-like_domsf"/>
</dbReference>
<dbReference type="InterPro" id="IPR044743">
    <property type="entry name" value="Ubl_USP48"/>
</dbReference>
<dbReference type="InterPro" id="IPR033841">
    <property type="entry name" value="USP48"/>
</dbReference>
<dbReference type="InterPro" id="IPR018200">
    <property type="entry name" value="USP_CS"/>
</dbReference>
<dbReference type="InterPro" id="IPR028889">
    <property type="entry name" value="USP_dom"/>
</dbReference>
<dbReference type="PANTHER" id="PTHR24006">
    <property type="entry name" value="UBIQUITIN CARBOXYL-TERMINAL HYDROLASE"/>
    <property type="match status" value="1"/>
</dbReference>
<dbReference type="PANTHER" id="PTHR24006:SF722">
    <property type="entry name" value="UBIQUITIN CARBOXYL-TERMINAL HYDROLASE 48"/>
    <property type="match status" value="1"/>
</dbReference>
<dbReference type="Pfam" id="PF06337">
    <property type="entry name" value="DUSP"/>
    <property type="match status" value="1"/>
</dbReference>
<dbReference type="Pfam" id="PF00443">
    <property type="entry name" value="UCH"/>
    <property type="match status" value="1"/>
</dbReference>
<dbReference type="SUPFAM" id="SSF54001">
    <property type="entry name" value="Cysteine proteinases"/>
    <property type="match status" value="1"/>
</dbReference>
<dbReference type="SUPFAM" id="SSF143791">
    <property type="entry name" value="DUSP-like"/>
    <property type="match status" value="1"/>
</dbReference>
<dbReference type="SUPFAM" id="SSF54236">
    <property type="entry name" value="Ubiquitin-like"/>
    <property type="match status" value="1"/>
</dbReference>
<dbReference type="PROSITE" id="PS51283">
    <property type="entry name" value="DUSP"/>
    <property type="match status" value="3"/>
</dbReference>
<dbReference type="PROSITE" id="PS50053">
    <property type="entry name" value="UBIQUITIN_2"/>
    <property type="match status" value="1"/>
</dbReference>
<dbReference type="PROSITE" id="PS00973">
    <property type="entry name" value="USP_2"/>
    <property type="match status" value="1"/>
</dbReference>
<dbReference type="PROSITE" id="PS50235">
    <property type="entry name" value="USP_3"/>
    <property type="match status" value="1"/>
</dbReference>
<name>UBP48_RAT</name>
<keyword id="KW-0007">Acetylation</keyword>
<keyword id="KW-0966">Cell projection</keyword>
<keyword id="KW-0963">Cytoplasm</keyword>
<keyword id="KW-0378">Hydrolase</keyword>
<keyword id="KW-0539">Nucleus</keyword>
<keyword id="KW-0597">Phosphoprotein</keyword>
<keyword id="KW-0645">Protease</keyword>
<keyword id="KW-1185">Reference proteome</keyword>
<keyword id="KW-0677">Repeat</keyword>
<keyword id="KW-0788">Thiol protease</keyword>
<keyword id="KW-0833">Ubl conjugation pathway</keyword>
<comment type="function">
    <text evidence="1 6">Deubiquitinase that recognizes and hydrolyzes the peptide bond at the C-terminal Gly of ubiquitin. Involved in the processing of polyubiquitin precursors as well as that of ubiquitinated proteins. Plays a role in the regulation of NF-kappa-B activation by TNF receptor superfamily via its interactions with RELA and TRAF2. May also play a regulatory role at postsynaptic sites (PubMed:14535949). Plays an important role in cell cycle progression by deubiquitinating Aurora B/AURKB and thereby extending its stability. In the context of H. pylori infection, stabilizes nuclear RELA through deubiquitination, thereby promoting the transcriptional activity of RELA to prolong TNFAIP3 de novo synthesis. Consequently, TNFAIP3 suppresses caspase activity and apoptotic cell death. Also functions in the modulation of the ciliary and synaptic transport as well as cytoskeleton organization, which are key for photoreceptor function and homeostasis. To achieve this, stabilizes the levels of the retinal degeneration-associated proteins ARL3 and UNC119 using distinct mechanisms. Plays a positive role in pyroptosis by stabilizing gasdermin E/GSDME through removal of its 'Lys-48'-linked ubiquitination.</text>
</comment>
<comment type="catalytic activity">
    <reaction evidence="6">
        <text>Thiol-dependent hydrolysis of ester, thioester, amide, peptide and isopeptide bonds formed by the C-terminal Gly of ubiquitin (a 76-residue protein attached to proteins as an intracellular targeting signal).</text>
        <dbReference type="EC" id="3.4.19.12"/>
    </reaction>
</comment>
<comment type="subunit">
    <text evidence="1">Interacts with TRAF2 and RELA. Interacts with GPS1.</text>
</comment>
<comment type="subcellular location">
    <subcellularLocation>
        <location evidence="1">Cytoplasm</location>
    </subcellularLocation>
    <subcellularLocation>
        <location evidence="1">Nucleus</location>
    </subcellularLocation>
    <subcellularLocation>
        <location evidence="1">Cell projection</location>
        <location evidence="1">Cilium</location>
    </subcellularLocation>
    <text evidence="6">In neuronal cells, it localizes to dendrites, as well as somas.</text>
</comment>
<comment type="tissue specificity">
    <text evidence="6">Present in the brain, in particular in the postsynaptic density and the dendritic lipid raft fractions (at protein level).</text>
</comment>
<comment type="similarity">
    <text evidence="7">Belongs to the peptidase C19 family.</text>
</comment>
<accession>Q76LT8</accession>
<protein>
    <recommendedName>
        <fullName>Ubiquitin carboxyl-terminal hydrolase 48</fullName>
        <ecNumber>3.4.19.12</ecNumber>
    </recommendedName>
    <alternativeName>
        <fullName>Deubiquitinating enzyme 48</fullName>
    </alternativeName>
    <alternativeName>
        <fullName>Synaptic ubiquitin-specific protease</fullName>
        <shortName>synUSP</shortName>
    </alternativeName>
    <alternativeName>
        <fullName>Ubiquitin thioesterase 48</fullName>
    </alternativeName>
    <alternativeName>
        <fullName>Ubiquitin-specific-processing protease 48</fullName>
    </alternativeName>
</protein>
<sequence length="1036" mass="118787">MAPRLQLEKAAWRWAETVRPEEVSQEHIETAYRIWLEPCIRGVCRRNCRGNPNCLVGIGEHIWLGEIDENSFHNIDDPNCERRKKNSFVGLTNLGASCYVNTFLQVWFLNLELRQALYLCPSTCSDYTKGDGIRGGKDYEPQTICEHLQYLFALLQNSNRRYIDPSGFVKALGLDTGQQQDAQESSKLFMSLLEDTLSKQKNPDVRNVVQQQFCGEYAYVTVCSQCGRESKLVSKFYELELNIQGHKQLTDCISEFLKEERLEGDNRYFCENCQSKQNATRKIRLLSLPCTLNLQLMRFVFDRQTGHKKKLNAYIGFSESLDMEPYVEHKGGSFVYELSAVLIHRGVSAYSGHYIAHVKDPQSGDWYKFNDEDIEKMEGKKLQLGIEEDLTEPSKSQTRKPKCGKGTHCSRNAYMLVYRLQTQEKNHTMVQVPAFLQELVDRDNSKFEEWCVEMAEMRRQSVDKGRAKHEEVKELYQRLPAGAEPYEFVSLEWLQKWLDESTPTKPIDNNACLCSHDKLHPDKISIMKRISEYAADIFYSRYGGGPRLTVKALCKDCVVERCRILRLKNQLNEDYKTVNNLLKATMKGSDGFWVGKSSLRSWRQLALEQLDEQDGEAEQSNGKINGSPFSKDESKEEKKEEEEELNFNEDILCPHGELSISENERRLVSQEAWSKLQQYFPKAPEFPSYKECCSQCKILEREGEENEALHKMIAKEQKTSLPNLFQDKNRPCLSNWPEDTDALYIVSHFFLDEWRKFVRKPARSTPVSSVGNAALLCPHGGLMFTFPSLTKEDSKLIALIWPSEWQMIQKLFVVDKVIKITRIEVGDVNPSQTQYISEPNLCPDCREGLLCQQQKDLREYTQATIYVHKVVDNKKVMKDSAPELNVSSSETEEDKEEAKPDGEKDPDFNQSNGGTKRQKTSQQGYVAYQKQVIRRSTRHRKVRGEKALLVSANQTLKELKIQIMHAFSVAPFDQNLSIDGKILNDDCATLGTLGVIPESVILLKADEPIADYAAMDDVMQVCMPEEGFKGTGLLGH</sequence>
<evidence type="ECO:0000250" key="1">
    <source>
        <dbReference type="UniProtKB" id="Q86UV5"/>
    </source>
</evidence>
<evidence type="ECO:0000255" key="2">
    <source>
        <dbReference type="PROSITE-ProRule" id="PRU00214"/>
    </source>
</evidence>
<evidence type="ECO:0000255" key="3">
    <source>
        <dbReference type="PROSITE-ProRule" id="PRU00613"/>
    </source>
</evidence>
<evidence type="ECO:0000255" key="4">
    <source>
        <dbReference type="PROSITE-ProRule" id="PRU10093"/>
    </source>
</evidence>
<evidence type="ECO:0000256" key="5">
    <source>
        <dbReference type="SAM" id="MobiDB-lite"/>
    </source>
</evidence>
<evidence type="ECO:0000269" key="6">
    <source>
    </source>
</evidence>
<evidence type="ECO:0000305" key="7"/>
<evidence type="ECO:0007744" key="8">
    <source>
    </source>
</evidence>
<proteinExistence type="evidence at protein level"/>
<reference key="1">
    <citation type="journal article" date="2003" name="J. Neurochem.">
        <title>A novel ubiquitin-specific protease, synUSP, is localized at the post-synaptic density and post-synaptic lipid raft.</title>
        <authorList>
            <person name="Tian Q.B."/>
            <person name="Okano A."/>
            <person name="Nakayama K."/>
            <person name="Miyazawa S."/>
            <person name="Endo S."/>
            <person name="Suzuki T."/>
        </authorList>
    </citation>
    <scope>NUCLEOTIDE SEQUENCE [MRNA]</scope>
    <scope>FUNCTION</scope>
    <scope>ENZYME ACTIVITY</scope>
    <scope>SUBCELLULAR LOCATION</scope>
    <scope>TISSUE SPECIFICITY</scope>
</reference>
<reference key="2">
    <citation type="journal article" date="2012" name="Nat. Commun.">
        <title>Quantitative maps of protein phosphorylation sites across 14 different rat organs and tissues.</title>
        <authorList>
            <person name="Lundby A."/>
            <person name="Secher A."/>
            <person name="Lage K."/>
            <person name="Nordsborg N.B."/>
            <person name="Dmytriyev A."/>
            <person name="Lundby C."/>
            <person name="Olsen J.V."/>
        </authorList>
    </citation>
    <scope>PHOSPHORYLATION [LARGE SCALE ANALYSIS] AT SER-887; SER-888 AND SER-889</scope>
    <scope>IDENTIFICATION BY MASS SPECTROMETRY [LARGE SCALE ANALYSIS]</scope>
</reference>
<feature type="chain" id="PRO_0000249525" description="Ubiquitin carboxyl-terminal hydrolase 48">
    <location>
        <begin position="1"/>
        <end position="1036"/>
    </location>
</feature>
<feature type="domain" description="USP">
    <location>
        <begin position="89"/>
        <end position="421"/>
    </location>
</feature>
<feature type="domain" description="DUSP 1" evidence="3">
    <location>
        <begin position="460"/>
        <end position="554"/>
    </location>
</feature>
<feature type="domain" description="DUSP 2" evidence="3">
    <location>
        <begin position="569"/>
        <end position="692"/>
    </location>
</feature>
<feature type="domain" description="DUSP 3" evidence="3">
    <location>
        <begin position="712"/>
        <end position="825"/>
    </location>
</feature>
<feature type="domain" description="Ubiquitin-like" evidence="2">
    <location>
        <begin position="930"/>
        <end position="1010"/>
    </location>
</feature>
<feature type="region of interest" description="Disordered" evidence="5">
    <location>
        <begin position="611"/>
        <end position="644"/>
    </location>
</feature>
<feature type="region of interest" description="Disordered" evidence="5">
    <location>
        <begin position="881"/>
        <end position="924"/>
    </location>
</feature>
<feature type="compositionally biased region" description="Polar residues" evidence="5">
    <location>
        <begin position="618"/>
        <end position="628"/>
    </location>
</feature>
<feature type="compositionally biased region" description="Basic and acidic residues" evidence="5">
    <location>
        <begin position="896"/>
        <end position="907"/>
    </location>
</feature>
<feature type="compositionally biased region" description="Polar residues" evidence="5">
    <location>
        <begin position="908"/>
        <end position="924"/>
    </location>
</feature>
<feature type="active site" description="Nucleophile" evidence="4">
    <location>
        <position position="98"/>
    </location>
</feature>
<feature type="active site" description="Proton acceptor" evidence="4">
    <location>
        <position position="353"/>
    </location>
</feature>
<feature type="modified residue" description="Phosphoserine" evidence="8">
    <location>
        <position position="887"/>
    </location>
</feature>
<feature type="modified residue" description="Phosphoserine" evidence="8">
    <location>
        <position position="888"/>
    </location>
</feature>
<feature type="modified residue" description="Phosphoserine" evidence="8">
    <location>
        <position position="889"/>
    </location>
</feature>
<feature type="modified residue" description="N6-acetyllysine" evidence="1">
    <location>
        <position position="957"/>
    </location>
</feature>
<gene>
    <name type="primary">Usp48</name>
</gene>